<organism>
    <name type="scientific">Galdieria sulphuraria</name>
    <name type="common">Red alga</name>
    <dbReference type="NCBI Taxonomy" id="130081"/>
    <lineage>
        <taxon>Eukaryota</taxon>
        <taxon>Rhodophyta</taxon>
        <taxon>Bangiophyceae</taxon>
        <taxon>Galdieriales</taxon>
        <taxon>Galdieriaceae</taxon>
        <taxon>Galdieria</taxon>
    </lineage>
</organism>
<keyword id="KW-0042">Antenna complex</keyword>
<keyword id="KW-0089">Bile pigment</keyword>
<keyword id="KW-0150">Chloroplast</keyword>
<keyword id="KW-0157">Chromophore</keyword>
<keyword id="KW-0903">Direct protein sequencing</keyword>
<keyword id="KW-0249">Electron transport</keyword>
<keyword id="KW-0472">Membrane</keyword>
<keyword id="KW-0488">Methylation</keyword>
<keyword id="KW-0602">Photosynthesis</keyword>
<keyword id="KW-0605">Phycobilisome</keyword>
<keyword id="KW-0934">Plastid</keyword>
<keyword id="KW-0793">Thylakoid</keyword>
<keyword id="KW-0813">Transport</keyword>
<gene>
    <name type="primary">apcA</name>
</gene>
<dbReference type="EMBL" id="X74548">
    <property type="protein sequence ID" value="CAA52641.1"/>
    <property type="molecule type" value="Genomic_DNA"/>
</dbReference>
<dbReference type="EMBL" id="L25349">
    <property type="protein sequence ID" value="AAA20110.1"/>
    <property type="molecule type" value="Genomic_DNA"/>
</dbReference>
<dbReference type="SMR" id="P00314"/>
<dbReference type="GO" id="GO:0009535">
    <property type="term" value="C:chloroplast thylakoid membrane"/>
    <property type="evidence" value="ECO:0007669"/>
    <property type="project" value="UniProtKB-SubCell"/>
</dbReference>
<dbReference type="GO" id="GO:0030089">
    <property type="term" value="C:phycobilisome"/>
    <property type="evidence" value="ECO:0007669"/>
    <property type="project" value="UniProtKB-KW"/>
</dbReference>
<dbReference type="GO" id="GO:0015979">
    <property type="term" value="P:photosynthesis"/>
    <property type="evidence" value="ECO:0007669"/>
    <property type="project" value="UniProtKB-KW"/>
</dbReference>
<dbReference type="CDD" id="cd12125">
    <property type="entry name" value="APC_alpha"/>
    <property type="match status" value="1"/>
</dbReference>
<dbReference type="Gene3D" id="1.10.490.20">
    <property type="entry name" value="Phycocyanins"/>
    <property type="match status" value="1"/>
</dbReference>
<dbReference type="InterPro" id="IPR009050">
    <property type="entry name" value="Globin-like_sf"/>
</dbReference>
<dbReference type="InterPro" id="IPR012128">
    <property type="entry name" value="Phycobilisome_asu/bsu"/>
</dbReference>
<dbReference type="InterPro" id="IPR038719">
    <property type="entry name" value="Phycobilisome_asu/bsu_sf"/>
</dbReference>
<dbReference type="PANTHER" id="PTHR34011:SF2">
    <property type="entry name" value="ALLOPHYCOCYANIN ALPHA CHAIN"/>
    <property type="match status" value="1"/>
</dbReference>
<dbReference type="PANTHER" id="PTHR34011">
    <property type="entry name" value="PHYCOBILISOME 32.1 KDA LINKER POLYPEPTIDE, PHYCOCYANIN-ASSOCIATED, ROD 2-RELATED"/>
    <property type="match status" value="1"/>
</dbReference>
<dbReference type="Pfam" id="PF00502">
    <property type="entry name" value="Phycobilisome"/>
    <property type="match status" value="1"/>
</dbReference>
<dbReference type="PIRSF" id="PIRSF000081">
    <property type="entry name" value="Phycocyanin"/>
    <property type="match status" value="1"/>
</dbReference>
<dbReference type="SUPFAM" id="SSF46458">
    <property type="entry name" value="Globin-like"/>
    <property type="match status" value="1"/>
</dbReference>
<evidence type="ECO:0000250" key="1"/>
<evidence type="ECO:0000305" key="2"/>
<comment type="function">
    <text>Light-harvesting photosynthetic bile pigment-protein from the phycobiliprotein complex. Allophycocyanin has a maximum absorption at approximately 650 nanometers.</text>
</comment>
<comment type="subunit">
    <text>Heterodimer of an alpha and a beta chain.</text>
</comment>
<comment type="subcellular location">
    <subcellularLocation>
        <location>Plastid</location>
        <location>Chloroplast thylakoid membrane</location>
        <topology>Peripheral membrane protein</topology>
        <orientation>Stromal side</orientation>
    </subcellularLocation>
    <text>Forms the core of the phycobilisome.</text>
</comment>
<comment type="PTM">
    <text>Contains one covalently linked phycocyanobilin chromophore.</text>
</comment>
<comment type="miscellaneous">
    <text evidence="2">Although originally identified as Cyanidium caldarium, these sequences derive from Galdieria sulphuraria.</text>
</comment>
<comment type="similarity">
    <text evidence="2">Belongs to the phycobiliprotein family.</text>
</comment>
<proteinExistence type="evidence at protein level"/>
<feature type="chain" id="PRO_0000199083" description="Allophycocyanin alpha chain">
    <location>
        <begin position="1"/>
        <end position="161"/>
    </location>
</feature>
<feature type="binding site" description="covalent">
    <location>
        <position position="81"/>
    </location>
    <ligand>
        <name>(2R,3E)-phycocyanobilin</name>
        <dbReference type="ChEBI" id="CHEBI:85275"/>
    </ligand>
</feature>
<feature type="modified residue" description="N4-methylasparagine" evidence="1">
    <location>
        <position position="71"/>
    </location>
</feature>
<feature type="sequence conflict" description="In Ref. 3; AA sequence." evidence="2" ref="3">
    <location>
        <position position="2"/>
    </location>
</feature>
<feature type="sequence conflict" description="In Ref. 2; AAA20110." evidence="2" ref="2">
    <original>I</original>
    <variation>T</variation>
    <location>
        <position position="8"/>
    </location>
</feature>
<feature type="sequence conflict" description="In Ref. 3; AA sequence." evidence="2" ref="3">
    <original>K</original>
    <variation>D</variation>
    <location>
        <position position="131"/>
    </location>
</feature>
<feature type="sequence conflict" description="In Ref. 3; AA sequence." evidence="2" ref="3">
    <original>S</original>
    <variation>R</variation>
    <location>
        <position position="146"/>
    </location>
</feature>
<feature type="sequence conflict" description="In Ref. 3; AA sequence." evidence="2" ref="3">
    <original>TIGAMQ</original>
    <variation>KLPASS</variation>
    <location>
        <begin position="156"/>
        <end position="161"/>
    </location>
</feature>
<sequence length="161" mass="17532">MSIVTKSIVNADAEARYLSPGELDRIKSFVLSGQRRLRIAQILTDNRERIVKQAGQQLFQQRPDIVSPGGNAYGEEMTATCLRDLDYYLRLVTYGVVAGDIAPIEEIGLVGVKEMYNSLGTPISAVAEGIKAMKNVACSLLSGDDSAEAGFYFDYTIGAMQ</sequence>
<protein>
    <recommendedName>
        <fullName>Allophycocyanin alpha chain</fullName>
    </recommendedName>
</protein>
<name>PHAA_GALSU</name>
<accession>P00314</accession>
<accession>P35909</accession>
<geneLocation type="chloroplast"/>
<reference key="1">
    <citation type="submission" date="1993-08" db="EMBL/GenBank/DDBJ databases">
        <authorList>
            <person name="Kostrzewa M."/>
            <person name="Zetsche K."/>
        </authorList>
    </citation>
    <scope>NUCLEOTIDE SEQUENCE [GENOMIC DNA]</scope>
    <source>
        <strain>14-1-1 / Isolate 107.79/Goettingen</strain>
    </source>
</reference>
<reference key="2">
    <citation type="journal article" date="1994" name="Plant Physiol.">
        <title>The allophycocyanin alpha subunit gene from Cyanidium caldarium.</title>
        <authorList>
            <person name="Liu B."/>
            <person name="Troxler R.F."/>
        </authorList>
    </citation>
    <scope>NUCLEOTIDE SEQUENCE [GENOMIC DNA]</scope>
    <source>
        <strain>III-D-2</strain>
    </source>
</reference>
<reference key="3">
    <citation type="journal article" date="1983" name="J. Biol. Chem.">
        <title>Primary structure of allophycocyanin from the unicellular rhodophyte, Cyanidium caldarium. The complete amino acid sequences of the alpha and beta subunits.</title>
        <authorList>
            <person name="Offner G.D."/>
            <person name="Troxler R.F."/>
        </authorList>
    </citation>
    <scope>PROTEIN SEQUENCE</scope>
</reference>